<sequence length="255" mass="27988">MVLIRVIANLLILQLSYAQKSSELVIGGDECDINEHRFLAFLYAGGYYCGGTLINQEWVLSAAHCDKRIIRIYLGMHTRSVPNDDEEIRYPKEKFICPNKKKNVITHKDIMLIRLNRPVKNSEHIAPLSLPSNPPSVGSVCRIMGWGSITTPDETSPNVPHCANINLFNNTVCREAYNGLPAKTLCAGVLQGGIDTCGGDSGGPLICNGQFQGILSWGGIPCAQPRKPAFYTKVFDYLPWIQSIIAGNKTATCPP</sequence>
<evidence type="ECO:0000250" key="1"/>
<evidence type="ECO:0000255" key="2"/>
<evidence type="ECO:0000255" key="3">
    <source>
        <dbReference type="PROSITE-ProRule" id="PRU00274"/>
    </source>
</evidence>
<proteinExistence type="evidence at transcript level"/>
<comment type="function">
    <text evidence="1">Snake venom serine protease that may act in the hemostasis system of the prey.</text>
</comment>
<comment type="subunit">
    <text evidence="1">Monomer.</text>
</comment>
<comment type="subcellular location">
    <subcellularLocation>
        <location evidence="1">Secreted</location>
    </subcellularLocation>
</comment>
<comment type="tissue specificity">
    <text>Expressed by the venom gland.</text>
</comment>
<comment type="similarity">
    <text evidence="3">Belongs to the peptidase S1 family. Snake venom subfamily.</text>
</comment>
<keyword id="KW-1015">Disulfide bond</keyword>
<keyword id="KW-0325">Glycoprotein</keyword>
<keyword id="KW-1199">Hemostasis impairing toxin</keyword>
<keyword id="KW-0378">Hydrolase</keyword>
<keyword id="KW-0645">Protease</keyword>
<keyword id="KW-0964">Secreted</keyword>
<keyword id="KW-0720">Serine protease</keyword>
<keyword id="KW-0732">Signal</keyword>
<keyword id="KW-0800">Toxin</keyword>
<keyword id="KW-0865">Zymogen</keyword>
<name>VSP12_BOTJA</name>
<feature type="signal peptide" evidence="2">
    <location>
        <begin position="1"/>
        <end position="18"/>
    </location>
</feature>
<feature type="propeptide" id="PRO_0000294988" evidence="1">
    <location>
        <begin position="19"/>
        <end position="24"/>
    </location>
</feature>
<feature type="chain" id="PRO_5000051171" description="Snake venom serine protease HS112">
    <location>
        <begin position="25"/>
        <end position="255"/>
    </location>
</feature>
<feature type="domain" description="Peptidase S1" evidence="3">
    <location>
        <begin position="25"/>
        <end position="246"/>
    </location>
</feature>
<feature type="active site" description="Charge relay system" evidence="1">
    <location>
        <position position="64"/>
    </location>
</feature>
<feature type="active site" description="Charge relay system" evidence="1">
    <location>
        <position position="109"/>
    </location>
</feature>
<feature type="active site" description="Charge relay system" evidence="1">
    <location>
        <position position="201"/>
    </location>
</feature>
<feature type="glycosylation site" description="N-linked (GlcNAc...) asparagine" evidence="1">
    <location>
        <position position="169"/>
    </location>
</feature>
<feature type="glycosylation site" description="N-linked (GlcNAc...) asparagine" evidence="1">
    <location>
        <position position="248"/>
    </location>
</feature>
<feature type="disulfide bond" evidence="3">
    <location>
        <begin position="31"/>
        <end position="162"/>
    </location>
</feature>
<feature type="disulfide bond" evidence="3">
    <location>
        <begin position="49"/>
        <end position="65"/>
    </location>
</feature>
<feature type="disulfide bond" evidence="3">
    <location>
        <begin position="97"/>
        <end position="253"/>
    </location>
</feature>
<feature type="disulfide bond" evidence="3">
    <location>
        <begin position="141"/>
        <end position="207"/>
    </location>
</feature>
<feature type="disulfide bond" evidence="3">
    <location>
        <begin position="173"/>
        <end position="186"/>
    </location>
</feature>
<feature type="disulfide bond" evidence="3">
    <location>
        <begin position="197"/>
        <end position="222"/>
    </location>
</feature>
<accession>Q5W960</accession>
<protein>
    <recommendedName>
        <fullName>Snake venom serine protease HS112</fullName>
        <shortName>SVSP</shortName>
        <ecNumber>3.4.21.-</ecNumber>
    </recommendedName>
</protein>
<organism>
    <name type="scientific">Bothrops jararaca</name>
    <name type="common">Jararaca</name>
    <name type="synonym">Bothrops jajaraca</name>
    <dbReference type="NCBI Taxonomy" id="8724"/>
    <lineage>
        <taxon>Eukaryota</taxon>
        <taxon>Metazoa</taxon>
        <taxon>Chordata</taxon>
        <taxon>Craniata</taxon>
        <taxon>Vertebrata</taxon>
        <taxon>Euteleostomi</taxon>
        <taxon>Lepidosauria</taxon>
        <taxon>Squamata</taxon>
        <taxon>Bifurcata</taxon>
        <taxon>Unidentata</taxon>
        <taxon>Episquamata</taxon>
        <taxon>Toxicofera</taxon>
        <taxon>Serpentes</taxon>
        <taxon>Colubroidea</taxon>
        <taxon>Viperidae</taxon>
        <taxon>Crotalinae</taxon>
        <taxon>Bothrops</taxon>
    </lineage>
</organism>
<reference key="1">
    <citation type="journal article" date="2005" name="Toxicon">
        <title>Molecular cloning of serine proteinases from Bothrops jararaca venom gland.</title>
        <authorList>
            <person name="Saguchi K."/>
            <person name="Hagiwara-Saguchi Y."/>
            <person name="Murayama N."/>
            <person name="Ohi H."/>
            <person name="Fujita Y."/>
            <person name="Camargo A.C.M."/>
            <person name="Serrano S.M.T."/>
            <person name="Higuchi S."/>
        </authorList>
    </citation>
    <scope>NUCLEOTIDE SEQUENCE [MRNA]</scope>
    <source>
        <tissue>Venom gland</tissue>
    </source>
</reference>
<dbReference type="EC" id="3.4.21.-"/>
<dbReference type="EMBL" id="AB178321">
    <property type="protein sequence ID" value="BAD66927.1"/>
    <property type="molecule type" value="mRNA"/>
</dbReference>
<dbReference type="SMR" id="Q5W960"/>
<dbReference type="MEROPS" id="S01.179"/>
<dbReference type="GO" id="GO:0005576">
    <property type="term" value="C:extracellular region"/>
    <property type="evidence" value="ECO:0007669"/>
    <property type="project" value="UniProtKB-SubCell"/>
</dbReference>
<dbReference type="GO" id="GO:0030141">
    <property type="term" value="C:secretory granule"/>
    <property type="evidence" value="ECO:0007669"/>
    <property type="project" value="TreeGrafter"/>
</dbReference>
<dbReference type="GO" id="GO:0004252">
    <property type="term" value="F:serine-type endopeptidase activity"/>
    <property type="evidence" value="ECO:0007669"/>
    <property type="project" value="InterPro"/>
</dbReference>
<dbReference type="GO" id="GO:0090729">
    <property type="term" value="F:toxin activity"/>
    <property type="evidence" value="ECO:0007669"/>
    <property type="project" value="UniProtKB-KW"/>
</dbReference>
<dbReference type="GO" id="GO:0006508">
    <property type="term" value="P:proteolysis"/>
    <property type="evidence" value="ECO:0007669"/>
    <property type="project" value="UniProtKB-KW"/>
</dbReference>
<dbReference type="CDD" id="cd00190">
    <property type="entry name" value="Tryp_SPc"/>
    <property type="match status" value="1"/>
</dbReference>
<dbReference type="FunFam" id="2.40.10.10:FF:000158">
    <property type="entry name" value="Thrombin-like enzyme saxthrombin"/>
    <property type="match status" value="1"/>
</dbReference>
<dbReference type="Gene3D" id="2.40.10.10">
    <property type="entry name" value="Trypsin-like serine proteases"/>
    <property type="match status" value="2"/>
</dbReference>
<dbReference type="InterPro" id="IPR009003">
    <property type="entry name" value="Peptidase_S1_PA"/>
</dbReference>
<dbReference type="InterPro" id="IPR043504">
    <property type="entry name" value="Peptidase_S1_PA_chymotrypsin"/>
</dbReference>
<dbReference type="InterPro" id="IPR001314">
    <property type="entry name" value="Peptidase_S1A"/>
</dbReference>
<dbReference type="InterPro" id="IPR001254">
    <property type="entry name" value="Trypsin_dom"/>
</dbReference>
<dbReference type="InterPro" id="IPR018114">
    <property type="entry name" value="TRYPSIN_HIS"/>
</dbReference>
<dbReference type="InterPro" id="IPR033116">
    <property type="entry name" value="TRYPSIN_SER"/>
</dbReference>
<dbReference type="PANTHER" id="PTHR24271:SF47">
    <property type="entry name" value="KALLIKREIN-1"/>
    <property type="match status" value="1"/>
</dbReference>
<dbReference type="PANTHER" id="PTHR24271">
    <property type="entry name" value="KALLIKREIN-RELATED"/>
    <property type="match status" value="1"/>
</dbReference>
<dbReference type="Pfam" id="PF00089">
    <property type="entry name" value="Trypsin"/>
    <property type="match status" value="1"/>
</dbReference>
<dbReference type="PRINTS" id="PR00722">
    <property type="entry name" value="CHYMOTRYPSIN"/>
</dbReference>
<dbReference type="SMART" id="SM00020">
    <property type="entry name" value="Tryp_SPc"/>
    <property type="match status" value="1"/>
</dbReference>
<dbReference type="SUPFAM" id="SSF50494">
    <property type="entry name" value="Trypsin-like serine proteases"/>
    <property type="match status" value="1"/>
</dbReference>
<dbReference type="PROSITE" id="PS50240">
    <property type="entry name" value="TRYPSIN_DOM"/>
    <property type="match status" value="1"/>
</dbReference>
<dbReference type="PROSITE" id="PS00134">
    <property type="entry name" value="TRYPSIN_HIS"/>
    <property type="match status" value="1"/>
</dbReference>
<dbReference type="PROSITE" id="PS00135">
    <property type="entry name" value="TRYPSIN_SER"/>
    <property type="match status" value="1"/>
</dbReference>